<sequence length="395" mass="42641">MANDYLFTSESVSEGHPDKVADQISDAILDAILAQDKYSRVAAETLCNTGLVVLAGEITTTANIDYIQIARDTIKRIGYDNTDYGIDYRGCAVLVAYDKQSPDIAQGVDRAHDNNLDQGAGDQGLMFGYACDETPELMPLPIHLSHRLVERQANLRRDGRLPWLRPDAKSQVTVRYVDGKPHSIDTVVLSTQHAPEIDLPALREAVIEEVIKPTLPADLIKGDIKFLVNPTGRFVIGGPQGDCGLTGRKIIVDTYGGAAPHGGGAFSGKDPSKVDRSAAYAGRYVAKNIVAAGLASRALIQVSYAIGVAEPTSVMVNTFGTGRVSDETITKLVREHFDLRPKGIIQMLDLLRPIYEKTAAYGHFGREEPEFSWEAADKALALAEAAGVEPAVQVA</sequence>
<accession>A3MRQ4</accession>
<proteinExistence type="inferred from homology"/>
<evidence type="ECO:0000255" key="1">
    <source>
        <dbReference type="HAMAP-Rule" id="MF_00086"/>
    </source>
</evidence>
<reference key="1">
    <citation type="journal article" date="2010" name="Genome Biol. Evol.">
        <title>Continuing evolution of Burkholderia mallei through genome reduction and large-scale rearrangements.</title>
        <authorList>
            <person name="Losada L."/>
            <person name="Ronning C.M."/>
            <person name="DeShazer D."/>
            <person name="Woods D."/>
            <person name="Fedorova N."/>
            <person name="Kim H.S."/>
            <person name="Shabalina S.A."/>
            <person name="Pearson T.R."/>
            <person name="Brinkac L."/>
            <person name="Tan P."/>
            <person name="Nandi T."/>
            <person name="Crabtree J."/>
            <person name="Badger J."/>
            <person name="Beckstrom-Sternberg S."/>
            <person name="Saqib M."/>
            <person name="Schutzer S.E."/>
            <person name="Keim P."/>
            <person name="Nierman W.C."/>
        </authorList>
    </citation>
    <scope>NUCLEOTIDE SEQUENCE [LARGE SCALE GENOMIC DNA]</scope>
    <source>
        <strain>NCTC 10247</strain>
    </source>
</reference>
<comment type="function">
    <text evidence="1">Catalyzes the formation of S-adenosylmethionine (AdoMet) from methionine and ATP. The overall synthetic reaction is composed of two sequential steps, AdoMet formation and the subsequent tripolyphosphate hydrolysis which occurs prior to release of AdoMet from the enzyme.</text>
</comment>
<comment type="catalytic activity">
    <reaction evidence="1">
        <text>L-methionine + ATP + H2O = S-adenosyl-L-methionine + phosphate + diphosphate</text>
        <dbReference type="Rhea" id="RHEA:21080"/>
        <dbReference type="ChEBI" id="CHEBI:15377"/>
        <dbReference type="ChEBI" id="CHEBI:30616"/>
        <dbReference type="ChEBI" id="CHEBI:33019"/>
        <dbReference type="ChEBI" id="CHEBI:43474"/>
        <dbReference type="ChEBI" id="CHEBI:57844"/>
        <dbReference type="ChEBI" id="CHEBI:59789"/>
        <dbReference type="EC" id="2.5.1.6"/>
    </reaction>
</comment>
<comment type="cofactor">
    <cofactor evidence="1">
        <name>Mg(2+)</name>
        <dbReference type="ChEBI" id="CHEBI:18420"/>
    </cofactor>
    <text evidence="1">Binds 2 divalent ions per subunit.</text>
</comment>
<comment type="cofactor">
    <cofactor evidence="1">
        <name>K(+)</name>
        <dbReference type="ChEBI" id="CHEBI:29103"/>
    </cofactor>
    <text evidence="1">Binds 1 potassium ion per subunit.</text>
</comment>
<comment type="pathway">
    <text evidence="1">Amino-acid biosynthesis; S-adenosyl-L-methionine biosynthesis; S-adenosyl-L-methionine from L-methionine: step 1/1.</text>
</comment>
<comment type="subunit">
    <text evidence="1">Homotetramer; dimer of dimers.</text>
</comment>
<comment type="subcellular location">
    <subcellularLocation>
        <location evidence="1">Cytoplasm</location>
    </subcellularLocation>
</comment>
<comment type="similarity">
    <text evidence="1">Belongs to the AdoMet synthase family.</text>
</comment>
<keyword id="KW-0067">ATP-binding</keyword>
<keyword id="KW-0963">Cytoplasm</keyword>
<keyword id="KW-0460">Magnesium</keyword>
<keyword id="KW-0479">Metal-binding</keyword>
<keyword id="KW-0547">Nucleotide-binding</keyword>
<keyword id="KW-0554">One-carbon metabolism</keyword>
<keyword id="KW-0630">Potassium</keyword>
<keyword id="KW-0808">Transferase</keyword>
<dbReference type="EC" id="2.5.1.6" evidence="1"/>
<dbReference type="EMBL" id="CP000548">
    <property type="protein sequence ID" value="ABO04649.1"/>
    <property type="molecule type" value="Genomic_DNA"/>
</dbReference>
<dbReference type="RefSeq" id="WP_004199069.1">
    <property type="nucleotide sequence ID" value="NZ_CP007802.1"/>
</dbReference>
<dbReference type="SMR" id="A3MRQ4"/>
<dbReference type="GeneID" id="93058721"/>
<dbReference type="KEGG" id="bmaz:BM44_3094"/>
<dbReference type="KEGG" id="bmn:BMA10247_3424"/>
<dbReference type="PATRIC" id="fig|320389.8.peg.3464"/>
<dbReference type="UniPathway" id="UPA00315">
    <property type="reaction ID" value="UER00080"/>
</dbReference>
<dbReference type="GO" id="GO:0005737">
    <property type="term" value="C:cytoplasm"/>
    <property type="evidence" value="ECO:0007669"/>
    <property type="project" value="UniProtKB-SubCell"/>
</dbReference>
<dbReference type="GO" id="GO:0005524">
    <property type="term" value="F:ATP binding"/>
    <property type="evidence" value="ECO:0007669"/>
    <property type="project" value="UniProtKB-UniRule"/>
</dbReference>
<dbReference type="GO" id="GO:0000287">
    <property type="term" value="F:magnesium ion binding"/>
    <property type="evidence" value="ECO:0007669"/>
    <property type="project" value="UniProtKB-UniRule"/>
</dbReference>
<dbReference type="GO" id="GO:0004478">
    <property type="term" value="F:methionine adenosyltransferase activity"/>
    <property type="evidence" value="ECO:0007669"/>
    <property type="project" value="UniProtKB-UniRule"/>
</dbReference>
<dbReference type="GO" id="GO:0006730">
    <property type="term" value="P:one-carbon metabolic process"/>
    <property type="evidence" value="ECO:0007669"/>
    <property type="project" value="UniProtKB-KW"/>
</dbReference>
<dbReference type="GO" id="GO:0006556">
    <property type="term" value="P:S-adenosylmethionine biosynthetic process"/>
    <property type="evidence" value="ECO:0007669"/>
    <property type="project" value="UniProtKB-UniRule"/>
</dbReference>
<dbReference type="CDD" id="cd18079">
    <property type="entry name" value="S-AdoMet_synt"/>
    <property type="match status" value="1"/>
</dbReference>
<dbReference type="FunFam" id="3.30.300.10:FF:000003">
    <property type="entry name" value="S-adenosylmethionine synthase"/>
    <property type="match status" value="1"/>
</dbReference>
<dbReference type="FunFam" id="3.30.300.10:FF:000004">
    <property type="entry name" value="S-adenosylmethionine synthase"/>
    <property type="match status" value="1"/>
</dbReference>
<dbReference type="Gene3D" id="3.30.300.10">
    <property type="match status" value="3"/>
</dbReference>
<dbReference type="HAMAP" id="MF_00086">
    <property type="entry name" value="S_AdoMet_synth1"/>
    <property type="match status" value="1"/>
</dbReference>
<dbReference type="InterPro" id="IPR022631">
    <property type="entry name" value="ADOMET_SYNTHASE_CS"/>
</dbReference>
<dbReference type="InterPro" id="IPR022630">
    <property type="entry name" value="S-AdoMet_synt_C"/>
</dbReference>
<dbReference type="InterPro" id="IPR022629">
    <property type="entry name" value="S-AdoMet_synt_central"/>
</dbReference>
<dbReference type="InterPro" id="IPR022628">
    <property type="entry name" value="S-AdoMet_synt_N"/>
</dbReference>
<dbReference type="InterPro" id="IPR002133">
    <property type="entry name" value="S-AdoMet_synthetase"/>
</dbReference>
<dbReference type="InterPro" id="IPR022636">
    <property type="entry name" value="S-AdoMet_synthetase_sfam"/>
</dbReference>
<dbReference type="NCBIfam" id="TIGR01034">
    <property type="entry name" value="metK"/>
    <property type="match status" value="1"/>
</dbReference>
<dbReference type="PANTHER" id="PTHR11964">
    <property type="entry name" value="S-ADENOSYLMETHIONINE SYNTHETASE"/>
    <property type="match status" value="1"/>
</dbReference>
<dbReference type="Pfam" id="PF02773">
    <property type="entry name" value="S-AdoMet_synt_C"/>
    <property type="match status" value="1"/>
</dbReference>
<dbReference type="Pfam" id="PF02772">
    <property type="entry name" value="S-AdoMet_synt_M"/>
    <property type="match status" value="1"/>
</dbReference>
<dbReference type="Pfam" id="PF00438">
    <property type="entry name" value="S-AdoMet_synt_N"/>
    <property type="match status" value="1"/>
</dbReference>
<dbReference type="PIRSF" id="PIRSF000497">
    <property type="entry name" value="MAT"/>
    <property type="match status" value="1"/>
</dbReference>
<dbReference type="SUPFAM" id="SSF55973">
    <property type="entry name" value="S-adenosylmethionine synthetase"/>
    <property type="match status" value="3"/>
</dbReference>
<dbReference type="PROSITE" id="PS00376">
    <property type="entry name" value="ADOMET_SYNTHASE_1"/>
    <property type="match status" value="1"/>
</dbReference>
<dbReference type="PROSITE" id="PS00377">
    <property type="entry name" value="ADOMET_SYNTHASE_2"/>
    <property type="match status" value="1"/>
</dbReference>
<gene>
    <name evidence="1" type="primary">metK</name>
    <name type="ordered locus">BMA10247_3424</name>
</gene>
<name>METK_BURM7</name>
<organism>
    <name type="scientific">Burkholderia mallei (strain NCTC 10247)</name>
    <dbReference type="NCBI Taxonomy" id="320389"/>
    <lineage>
        <taxon>Bacteria</taxon>
        <taxon>Pseudomonadati</taxon>
        <taxon>Pseudomonadota</taxon>
        <taxon>Betaproteobacteria</taxon>
        <taxon>Burkholderiales</taxon>
        <taxon>Burkholderiaceae</taxon>
        <taxon>Burkholderia</taxon>
        <taxon>pseudomallei group</taxon>
    </lineage>
</organism>
<protein>
    <recommendedName>
        <fullName evidence="1">S-adenosylmethionine synthase</fullName>
        <shortName evidence="1">AdoMet synthase</shortName>
        <ecNumber evidence="1">2.5.1.6</ecNumber>
    </recommendedName>
    <alternativeName>
        <fullName evidence="1">MAT</fullName>
    </alternativeName>
    <alternativeName>
        <fullName evidence="1">Methionine adenosyltransferase</fullName>
    </alternativeName>
</protein>
<feature type="chain" id="PRO_1000007927" description="S-adenosylmethionine synthase">
    <location>
        <begin position="1"/>
        <end position="395"/>
    </location>
</feature>
<feature type="region of interest" description="Flexible loop" evidence="1">
    <location>
        <begin position="100"/>
        <end position="110"/>
    </location>
</feature>
<feature type="binding site" description="in other chain" evidence="1">
    <location>
        <position position="16"/>
    </location>
    <ligand>
        <name>ATP</name>
        <dbReference type="ChEBI" id="CHEBI:30616"/>
        <note>ligand shared between two neighboring subunits</note>
    </ligand>
</feature>
<feature type="binding site" evidence="1">
    <location>
        <position position="18"/>
    </location>
    <ligand>
        <name>Mg(2+)</name>
        <dbReference type="ChEBI" id="CHEBI:18420"/>
    </ligand>
</feature>
<feature type="binding site" evidence="1">
    <location>
        <position position="44"/>
    </location>
    <ligand>
        <name>K(+)</name>
        <dbReference type="ChEBI" id="CHEBI:29103"/>
    </ligand>
</feature>
<feature type="binding site" description="in other chain" evidence="1">
    <location>
        <position position="57"/>
    </location>
    <ligand>
        <name>L-methionine</name>
        <dbReference type="ChEBI" id="CHEBI:57844"/>
        <note>ligand shared between two neighboring subunits</note>
    </ligand>
</feature>
<feature type="binding site" description="in other chain" evidence="1">
    <location>
        <position position="100"/>
    </location>
    <ligand>
        <name>L-methionine</name>
        <dbReference type="ChEBI" id="CHEBI:57844"/>
        <note>ligand shared between two neighboring subunits</note>
    </ligand>
</feature>
<feature type="binding site" description="in other chain" evidence="1">
    <location>
        <begin position="167"/>
        <end position="169"/>
    </location>
    <ligand>
        <name>ATP</name>
        <dbReference type="ChEBI" id="CHEBI:30616"/>
        <note>ligand shared between two neighboring subunits</note>
    </ligand>
</feature>
<feature type="binding site" description="in other chain" evidence="1">
    <location>
        <begin position="233"/>
        <end position="234"/>
    </location>
    <ligand>
        <name>ATP</name>
        <dbReference type="ChEBI" id="CHEBI:30616"/>
        <note>ligand shared between two neighboring subunits</note>
    </ligand>
</feature>
<feature type="binding site" evidence="1">
    <location>
        <position position="242"/>
    </location>
    <ligand>
        <name>ATP</name>
        <dbReference type="ChEBI" id="CHEBI:30616"/>
        <note>ligand shared between two neighboring subunits</note>
    </ligand>
</feature>
<feature type="binding site" evidence="1">
    <location>
        <position position="242"/>
    </location>
    <ligand>
        <name>L-methionine</name>
        <dbReference type="ChEBI" id="CHEBI:57844"/>
        <note>ligand shared between two neighboring subunits</note>
    </ligand>
</feature>
<feature type="binding site" description="in other chain" evidence="1">
    <location>
        <begin position="248"/>
        <end position="249"/>
    </location>
    <ligand>
        <name>ATP</name>
        <dbReference type="ChEBI" id="CHEBI:30616"/>
        <note>ligand shared between two neighboring subunits</note>
    </ligand>
</feature>
<feature type="binding site" evidence="1">
    <location>
        <position position="265"/>
    </location>
    <ligand>
        <name>ATP</name>
        <dbReference type="ChEBI" id="CHEBI:30616"/>
        <note>ligand shared between two neighboring subunits</note>
    </ligand>
</feature>
<feature type="binding site" evidence="1">
    <location>
        <position position="269"/>
    </location>
    <ligand>
        <name>ATP</name>
        <dbReference type="ChEBI" id="CHEBI:30616"/>
        <note>ligand shared between two neighboring subunits</note>
    </ligand>
</feature>
<feature type="binding site" description="in other chain" evidence="1">
    <location>
        <position position="273"/>
    </location>
    <ligand>
        <name>L-methionine</name>
        <dbReference type="ChEBI" id="CHEBI:57844"/>
        <note>ligand shared between two neighboring subunits</note>
    </ligand>
</feature>